<protein>
    <recommendedName>
        <fullName evidence="1">Tagatose-6-phosphate kinase</fullName>
        <ecNumber evidence="1">2.7.1.144</ecNumber>
    </recommendedName>
    <alternativeName>
        <fullName evidence="1">Phosphotagatokinase</fullName>
    </alternativeName>
</protein>
<accession>Q5HE12</accession>
<keyword id="KW-0002">3D-structure</keyword>
<keyword id="KW-0067">ATP-binding</keyword>
<keyword id="KW-0418">Kinase</keyword>
<keyword id="KW-0423">Lactose metabolism</keyword>
<keyword id="KW-0547">Nucleotide-binding</keyword>
<keyword id="KW-0808">Transferase</keyword>
<organism>
    <name type="scientific">Staphylococcus aureus (strain COL)</name>
    <dbReference type="NCBI Taxonomy" id="93062"/>
    <lineage>
        <taxon>Bacteria</taxon>
        <taxon>Bacillati</taxon>
        <taxon>Bacillota</taxon>
        <taxon>Bacilli</taxon>
        <taxon>Bacillales</taxon>
        <taxon>Staphylococcaceae</taxon>
        <taxon>Staphylococcus</taxon>
    </lineage>
</organism>
<proteinExistence type="evidence at protein level"/>
<feature type="chain" id="PRO_0000203917" description="Tagatose-6-phosphate kinase">
    <location>
        <begin position="1"/>
        <end position="310"/>
    </location>
</feature>
<feature type="strand" evidence="2">
    <location>
        <begin position="2"/>
        <end position="8"/>
    </location>
</feature>
<feature type="strand" evidence="2">
    <location>
        <begin position="10"/>
        <end position="18"/>
    </location>
</feature>
<feature type="strand" evidence="2">
    <location>
        <begin position="24"/>
        <end position="29"/>
    </location>
</feature>
<feature type="strand" evidence="2">
    <location>
        <begin position="32"/>
        <end position="37"/>
    </location>
</feature>
<feature type="helix" evidence="2">
    <location>
        <begin position="38"/>
        <end position="49"/>
    </location>
</feature>
<feature type="strand" evidence="2">
    <location>
        <begin position="53"/>
        <end position="59"/>
    </location>
</feature>
<feature type="helix" evidence="2">
    <location>
        <begin position="61"/>
        <end position="73"/>
    </location>
</feature>
<feature type="strand" evidence="2">
    <location>
        <begin position="88"/>
        <end position="95"/>
    </location>
</feature>
<feature type="strand" evidence="2">
    <location>
        <begin position="98"/>
        <end position="104"/>
    </location>
</feature>
<feature type="helix" evidence="2">
    <location>
        <begin position="111"/>
        <end position="125"/>
    </location>
</feature>
<feature type="strand" evidence="2">
    <location>
        <begin position="129"/>
        <end position="135"/>
    </location>
</feature>
<feature type="helix" evidence="2">
    <location>
        <begin position="145"/>
        <end position="156"/>
    </location>
</feature>
<feature type="strand" evidence="2">
    <location>
        <begin position="160"/>
        <end position="163"/>
    </location>
</feature>
<feature type="helix" evidence="2">
    <location>
        <begin position="166"/>
        <end position="174"/>
    </location>
</feature>
<feature type="strand" evidence="2">
    <location>
        <begin position="175"/>
        <end position="177"/>
    </location>
</feature>
<feature type="strand" evidence="2">
    <location>
        <begin position="180"/>
        <end position="182"/>
    </location>
</feature>
<feature type="helix" evidence="2">
    <location>
        <begin position="186"/>
        <end position="193"/>
    </location>
</feature>
<feature type="helix" evidence="2">
    <location>
        <begin position="201"/>
        <end position="208"/>
    </location>
</feature>
<feature type="helix" evidence="2">
    <location>
        <begin position="211"/>
        <end position="213"/>
    </location>
</feature>
<feature type="strand" evidence="2">
    <location>
        <begin position="217"/>
        <end position="222"/>
    </location>
</feature>
<feature type="strand" evidence="2">
    <location>
        <begin position="228"/>
        <end position="232"/>
    </location>
</feature>
<feature type="strand" evidence="2">
    <location>
        <begin position="235"/>
        <end position="240"/>
    </location>
</feature>
<feature type="helix" evidence="2">
    <location>
        <begin position="252"/>
        <end position="265"/>
    </location>
</feature>
<feature type="helix" evidence="2">
    <location>
        <begin position="270"/>
        <end position="285"/>
    </location>
</feature>
<feature type="strand" evidence="2">
    <location>
        <begin position="287"/>
        <end position="289"/>
    </location>
</feature>
<feature type="helix" evidence="2">
    <location>
        <begin position="295"/>
        <end position="297"/>
    </location>
</feature>
<feature type="helix" evidence="2">
    <location>
        <begin position="298"/>
        <end position="302"/>
    </location>
</feature>
<feature type="strand" evidence="2">
    <location>
        <begin position="306"/>
        <end position="309"/>
    </location>
</feature>
<comment type="catalytic activity">
    <reaction evidence="1">
        <text>D-tagatofuranose 6-phosphate + ATP = D-tagatofuranose 1,6-bisphosphate + ADP + H(+)</text>
        <dbReference type="Rhea" id="RHEA:12420"/>
        <dbReference type="ChEBI" id="CHEBI:15378"/>
        <dbReference type="ChEBI" id="CHEBI:30616"/>
        <dbReference type="ChEBI" id="CHEBI:58694"/>
        <dbReference type="ChEBI" id="CHEBI:58695"/>
        <dbReference type="ChEBI" id="CHEBI:456216"/>
        <dbReference type="EC" id="2.7.1.144"/>
    </reaction>
</comment>
<comment type="pathway">
    <text evidence="1">Carbohydrate metabolism; D-tagatose 6-phosphate degradation; D-glyceraldehyde 3-phosphate and glycerone phosphate from D-tagatose 6-phosphate: step 1/2.</text>
</comment>
<comment type="similarity">
    <text evidence="1">Belongs to the carbohydrate kinase PfkB family. LacC subfamily.</text>
</comment>
<sequence length="310" mass="33853">MILTLTLNPSVDISYPLTALKLDDVNRVQEVSKTAGGKGLNVTRVLAQVGEPVLASGFIGGELGQFIAKKLDHADIKHAFYNIKGETRNCIAILHEGQQTEILEQGPEIDNQEAAGFIKHFEQLLEKVEAVAISGSLPKGLNQDYYAQIIERCQNKGVPVILDCSGATLQTVLENPYKPTVIKPNISELYQLLNQPLDESLESLKQAVSQPLFEGIEWIIVSLGAQGAFAKHNHTFYRVNIPTISVLNPVGSGDSTVAGITSAILNHENDHDLLKKANTLGMLNAQEAQTGYVNLNNYDDLFNQIEVLEV</sequence>
<dbReference type="EC" id="2.7.1.144" evidence="1"/>
<dbReference type="EMBL" id="CP000046">
    <property type="protein sequence ID" value="AAW37060.1"/>
    <property type="molecule type" value="Genomic_DNA"/>
</dbReference>
<dbReference type="RefSeq" id="WP_000604135.1">
    <property type="nucleotide sequence ID" value="NZ_JBGOFO010000004.1"/>
</dbReference>
<dbReference type="PDB" id="2Q5R">
    <property type="method" value="X-ray"/>
    <property type="resolution" value="2.30 A"/>
    <property type="chains" value="A/B/C/D=1-310"/>
</dbReference>
<dbReference type="PDBsum" id="2Q5R"/>
<dbReference type="SMR" id="Q5HE12"/>
<dbReference type="KEGG" id="sac:SACOL2184"/>
<dbReference type="HOGENOM" id="CLU_050013_5_0_9"/>
<dbReference type="UniPathway" id="UPA00704">
    <property type="reaction ID" value="UER00715"/>
</dbReference>
<dbReference type="EvolutionaryTrace" id="Q5HE12"/>
<dbReference type="Proteomes" id="UP000000530">
    <property type="component" value="Chromosome"/>
</dbReference>
<dbReference type="GO" id="GO:0005829">
    <property type="term" value="C:cytosol"/>
    <property type="evidence" value="ECO:0007669"/>
    <property type="project" value="TreeGrafter"/>
</dbReference>
<dbReference type="GO" id="GO:0005524">
    <property type="term" value="F:ATP binding"/>
    <property type="evidence" value="ECO:0007669"/>
    <property type="project" value="UniProtKB-KW"/>
</dbReference>
<dbReference type="GO" id="GO:0008443">
    <property type="term" value="F:phosphofructokinase activity"/>
    <property type="evidence" value="ECO:0007669"/>
    <property type="project" value="TreeGrafter"/>
</dbReference>
<dbReference type="GO" id="GO:0009024">
    <property type="term" value="F:tagatose-6-phosphate kinase activity"/>
    <property type="evidence" value="ECO:0007669"/>
    <property type="project" value="UniProtKB-UniRule"/>
</dbReference>
<dbReference type="GO" id="GO:2001059">
    <property type="term" value="P:D-tagatose 6-phosphate catabolic process"/>
    <property type="evidence" value="ECO:0007669"/>
    <property type="project" value="UniProtKB-UniRule"/>
</dbReference>
<dbReference type="GO" id="GO:0019512">
    <property type="term" value="P:lactose catabolic process via tagatose-6-phosphate"/>
    <property type="evidence" value="ECO:0007669"/>
    <property type="project" value="InterPro"/>
</dbReference>
<dbReference type="CDD" id="cd01164">
    <property type="entry name" value="FruK_PfkB_like"/>
    <property type="match status" value="1"/>
</dbReference>
<dbReference type="FunFam" id="3.40.1190.20:FF:000001">
    <property type="entry name" value="Phosphofructokinase"/>
    <property type="match status" value="1"/>
</dbReference>
<dbReference type="Gene3D" id="3.40.1190.20">
    <property type="match status" value="1"/>
</dbReference>
<dbReference type="HAMAP" id="MF_01557">
    <property type="entry name" value="LacC"/>
    <property type="match status" value="1"/>
</dbReference>
<dbReference type="InterPro" id="IPR002173">
    <property type="entry name" value="Carboh/pur_kinase_PfkB_CS"/>
</dbReference>
<dbReference type="InterPro" id="IPR005926">
    <property type="entry name" value="LacC"/>
</dbReference>
<dbReference type="InterPro" id="IPR011611">
    <property type="entry name" value="PfkB_dom"/>
</dbReference>
<dbReference type="InterPro" id="IPR029056">
    <property type="entry name" value="Ribokinase-like"/>
</dbReference>
<dbReference type="InterPro" id="IPR017583">
    <property type="entry name" value="Tagatose/fructose_Pkinase"/>
</dbReference>
<dbReference type="NCBIfam" id="TIGR03168">
    <property type="entry name" value="1-PFK"/>
    <property type="match status" value="1"/>
</dbReference>
<dbReference type="NCBIfam" id="TIGR01231">
    <property type="entry name" value="lacC"/>
    <property type="match status" value="1"/>
</dbReference>
<dbReference type="NCBIfam" id="NF010033">
    <property type="entry name" value="PRK13508.1"/>
    <property type="match status" value="1"/>
</dbReference>
<dbReference type="PANTHER" id="PTHR46566:SF5">
    <property type="entry name" value="1-PHOSPHOFRUCTOKINASE"/>
    <property type="match status" value="1"/>
</dbReference>
<dbReference type="PANTHER" id="PTHR46566">
    <property type="entry name" value="1-PHOSPHOFRUCTOKINASE-RELATED"/>
    <property type="match status" value="1"/>
</dbReference>
<dbReference type="Pfam" id="PF00294">
    <property type="entry name" value="PfkB"/>
    <property type="match status" value="1"/>
</dbReference>
<dbReference type="PIRSF" id="PIRSF000535">
    <property type="entry name" value="1PFK/6PFK/LacC"/>
    <property type="match status" value="1"/>
</dbReference>
<dbReference type="SUPFAM" id="SSF53613">
    <property type="entry name" value="Ribokinase-like"/>
    <property type="match status" value="1"/>
</dbReference>
<dbReference type="PROSITE" id="PS00583">
    <property type="entry name" value="PFKB_KINASES_1"/>
    <property type="match status" value="1"/>
</dbReference>
<dbReference type="PROSITE" id="PS00584">
    <property type="entry name" value="PFKB_KINASES_2"/>
    <property type="match status" value="1"/>
</dbReference>
<reference key="1">
    <citation type="journal article" date="2005" name="J. Bacteriol.">
        <title>Insights on evolution of virulence and resistance from the complete genome analysis of an early methicillin-resistant Staphylococcus aureus strain and a biofilm-producing methicillin-resistant Staphylococcus epidermidis strain.</title>
        <authorList>
            <person name="Gill S.R."/>
            <person name="Fouts D.E."/>
            <person name="Archer G.L."/>
            <person name="Mongodin E.F."/>
            <person name="DeBoy R.T."/>
            <person name="Ravel J."/>
            <person name="Paulsen I.T."/>
            <person name="Kolonay J.F."/>
            <person name="Brinkac L.M."/>
            <person name="Beanan M.J."/>
            <person name="Dodson R.J."/>
            <person name="Daugherty S.C."/>
            <person name="Madupu R."/>
            <person name="Angiuoli S.V."/>
            <person name="Durkin A.S."/>
            <person name="Haft D.H."/>
            <person name="Vamathevan J.J."/>
            <person name="Khouri H."/>
            <person name="Utterback T.R."/>
            <person name="Lee C."/>
            <person name="Dimitrov G."/>
            <person name="Jiang L."/>
            <person name="Qin H."/>
            <person name="Weidman J."/>
            <person name="Tran K."/>
            <person name="Kang K.H."/>
            <person name="Hance I.R."/>
            <person name="Nelson K.E."/>
            <person name="Fraser C.M."/>
        </authorList>
    </citation>
    <scope>NUCLEOTIDE SEQUENCE [LARGE SCALE GENOMIC DNA]</scope>
    <source>
        <strain>COL</strain>
    </source>
</reference>
<evidence type="ECO:0000255" key="1">
    <source>
        <dbReference type="HAMAP-Rule" id="MF_01557"/>
    </source>
</evidence>
<evidence type="ECO:0007829" key="2">
    <source>
        <dbReference type="PDB" id="2Q5R"/>
    </source>
</evidence>
<name>LACC_STAAC</name>
<gene>
    <name evidence="1" type="primary">lacC</name>
    <name type="ordered locus">SACOL2184</name>
</gene>